<accession>B2UCY0</accession>
<keyword id="KW-0131">Cell cycle</keyword>
<keyword id="KW-0132">Cell division</keyword>
<keyword id="KW-0997">Cell inner membrane</keyword>
<keyword id="KW-1003">Cell membrane</keyword>
<keyword id="KW-0133">Cell shape</keyword>
<keyword id="KW-0961">Cell wall biogenesis/degradation</keyword>
<keyword id="KW-0460">Magnesium</keyword>
<keyword id="KW-0472">Membrane</keyword>
<keyword id="KW-0479">Metal-binding</keyword>
<keyword id="KW-0573">Peptidoglycan synthesis</keyword>
<keyword id="KW-0808">Transferase</keyword>
<keyword id="KW-0812">Transmembrane</keyword>
<keyword id="KW-1133">Transmembrane helix</keyword>
<sequence>MLLALAQWLQNDYGFLRVFNYLTFRAVMASLTALVIGLGFGPFVIRRLTELKVGQAVRSYGPQTHLVKAGTPTMGGVLVLIGIAVSTLLWADWGNRFIWIVLLVTLGYGAIGWVDDYRKVVHRDPKGMSSREKFFWQTVIGLFAAAYLAFSVSETSNMRVLELFMEWVRSGLSLNLPAKSHLIVPFFKEISYPLGVFGFIILTYLVIVGSSNAVNLTDGLDGLVIMPVVLVGSALGVFAYVMGSAVYSKYLLFPHIPGAGELLIFCSAMAGAGLAFLWFNAHPAQVFMGDVGALALGGALGTIAVIVRQEIVLFIMGGIFVAETVSVMLQVTWFKFTKKRYGEGRRLFRMAPLHHHFELSGWKETQVVVRFWVITMMLVLIGLSTLKLR</sequence>
<evidence type="ECO:0000255" key="1">
    <source>
        <dbReference type="HAMAP-Rule" id="MF_00038"/>
    </source>
</evidence>
<reference key="1">
    <citation type="submission" date="2008-05" db="EMBL/GenBank/DDBJ databases">
        <title>Complete sequence of chromosome 1 of Ralstonia pickettii 12J.</title>
        <authorList>
            <person name="Lucas S."/>
            <person name="Copeland A."/>
            <person name="Lapidus A."/>
            <person name="Glavina del Rio T."/>
            <person name="Dalin E."/>
            <person name="Tice H."/>
            <person name="Bruce D."/>
            <person name="Goodwin L."/>
            <person name="Pitluck S."/>
            <person name="Meincke L."/>
            <person name="Brettin T."/>
            <person name="Detter J.C."/>
            <person name="Han C."/>
            <person name="Kuske C.R."/>
            <person name="Schmutz J."/>
            <person name="Larimer F."/>
            <person name="Land M."/>
            <person name="Hauser L."/>
            <person name="Kyrpides N."/>
            <person name="Mikhailova N."/>
            <person name="Marsh T."/>
            <person name="Richardson P."/>
        </authorList>
    </citation>
    <scope>NUCLEOTIDE SEQUENCE [LARGE SCALE GENOMIC DNA]</scope>
    <source>
        <strain>12J</strain>
    </source>
</reference>
<name>MRAY_RALPJ</name>
<proteinExistence type="inferred from homology"/>
<comment type="function">
    <text evidence="1">Catalyzes the initial step of the lipid cycle reactions in the biosynthesis of the cell wall peptidoglycan: transfers peptidoglycan precursor phospho-MurNAc-pentapeptide from UDP-MurNAc-pentapeptide onto the lipid carrier undecaprenyl phosphate, yielding undecaprenyl-pyrophosphoryl-MurNAc-pentapeptide, known as lipid I.</text>
</comment>
<comment type="catalytic activity">
    <reaction evidence="1">
        <text>UDP-N-acetyl-alpha-D-muramoyl-L-alanyl-gamma-D-glutamyl-meso-2,6-diaminopimeloyl-D-alanyl-D-alanine + di-trans,octa-cis-undecaprenyl phosphate = di-trans,octa-cis-undecaprenyl diphospho-N-acetyl-alpha-D-muramoyl-L-alanyl-D-glutamyl-meso-2,6-diaminopimeloyl-D-alanyl-D-alanine + UMP</text>
        <dbReference type="Rhea" id="RHEA:28386"/>
        <dbReference type="ChEBI" id="CHEBI:57865"/>
        <dbReference type="ChEBI" id="CHEBI:60392"/>
        <dbReference type="ChEBI" id="CHEBI:61386"/>
        <dbReference type="ChEBI" id="CHEBI:61387"/>
        <dbReference type="EC" id="2.7.8.13"/>
    </reaction>
</comment>
<comment type="cofactor">
    <cofactor evidence="1">
        <name>Mg(2+)</name>
        <dbReference type="ChEBI" id="CHEBI:18420"/>
    </cofactor>
</comment>
<comment type="pathway">
    <text evidence="1">Cell wall biogenesis; peptidoglycan biosynthesis.</text>
</comment>
<comment type="subcellular location">
    <subcellularLocation>
        <location evidence="1">Cell inner membrane</location>
        <topology evidence="1">Multi-pass membrane protein</topology>
    </subcellularLocation>
</comment>
<comment type="similarity">
    <text evidence="1">Belongs to the glycosyltransferase 4 family. MraY subfamily.</text>
</comment>
<organism>
    <name type="scientific">Ralstonia pickettii (strain 12J)</name>
    <dbReference type="NCBI Taxonomy" id="402626"/>
    <lineage>
        <taxon>Bacteria</taxon>
        <taxon>Pseudomonadati</taxon>
        <taxon>Pseudomonadota</taxon>
        <taxon>Betaproteobacteria</taxon>
        <taxon>Burkholderiales</taxon>
        <taxon>Burkholderiaceae</taxon>
        <taxon>Ralstonia</taxon>
    </lineage>
</organism>
<feature type="chain" id="PRO_1000090660" description="Phospho-N-acetylmuramoyl-pentapeptide-transferase">
    <location>
        <begin position="1"/>
        <end position="389"/>
    </location>
</feature>
<feature type="transmembrane region" description="Helical" evidence="1">
    <location>
        <begin position="25"/>
        <end position="45"/>
    </location>
</feature>
<feature type="transmembrane region" description="Helical" evidence="1">
    <location>
        <begin position="74"/>
        <end position="94"/>
    </location>
</feature>
<feature type="transmembrane region" description="Helical" evidence="1">
    <location>
        <begin position="97"/>
        <end position="117"/>
    </location>
</feature>
<feature type="transmembrane region" description="Helical" evidence="1">
    <location>
        <begin position="134"/>
        <end position="154"/>
    </location>
</feature>
<feature type="transmembrane region" description="Helical" evidence="1">
    <location>
        <begin position="190"/>
        <end position="210"/>
    </location>
</feature>
<feature type="transmembrane region" description="Helical" evidence="1">
    <location>
        <begin position="222"/>
        <end position="242"/>
    </location>
</feature>
<feature type="transmembrane region" description="Helical" evidence="1">
    <location>
        <begin position="259"/>
        <end position="279"/>
    </location>
</feature>
<feature type="transmembrane region" description="Helical" evidence="1">
    <location>
        <begin position="286"/>
        <end position="306"/>
    </location>
</feature>
<feature type="transmembrane region" description="Helical" evidence="1">
    <location>
        <begin position="311"/>
        <end position="331"/>
    </location>
</feature>
<feature type="transmembrane region" description="Helical" evidence="1">
    <location>
        <begin position="366"/>
        <end position="386"/>
    </location>
</feature>
<protein>
    <recommendedName>
        <fullName evidence="1">Phospho-N-acetylmuramoyl-pentapeptide-transferase</fullName>
        <ecNumber evidence="1">2.7.8.13</ecNumber>
    </recommendedName>
    <alternativeName>
        <fullName evidence="1">UDP-MurNAc-pentapeptide phosphotransferase</fullName>
    </alternativeName>
</protein>
<gene>
    <name evidence="1" type="primary">mraY</name>
    <name type="ordered locus">Rpic_3092</name>
</gene>
<dbReference type="EC" id="2.7.8.13" evidence="1"/>
<dbReference type="EMBL" id="CP001068">
    <property type="protein sequence ID" value="ACD28215.1"/>
    <property type="molecule type" value="Genomic_DNA"/>
</dbReference>
<dbReference type="SMR" id="B2UCY0"/>
<dbReference type="STRING" id="402626.Rpic_3092"/>
<dbReference type="KEGG" id="rpi:Rpic_3092"/>
<dbReference type="PATRIC" id="fig|402626.5.peg.4230"/>
<dbReference type="eggNOG" id="COG0472">
    <property type="taxonomic scope" value="Bacteria"/>
</dbReference>
<dbReference type="HOGENOM" id="CLU_023982_0_0_4"/>
<dbReference type="UniPathway" id="UPA00219"/>
<dbReference type="GO" id="GO:0005886">
    <property type="term" value="C:plasma membrane"/>
    <property type="evidence" value="ECO:0007669"/>
    <property type="project" value="UniProtKB-SubCell"/>
</dbReference>
<dbReference type="GO" id="GO:0046872">
    <property type="term" value="F:metal ion binding"/>
    <property type="evidence" value="ECO:0007669"/>
    <property type="project" value="UniProtKB-KW"/>
</dbReference>
<dbReference type="GO" id="GO:0008963">
    <property type="term" value="F:phospho-N-acetylmuramoyl-pentapeptide-transferase activity"/>
    <property type="evidence" value="ECO:0007669"/>
    <property type="project" value="UniProtKB-UniRule"/>
</dbReference>
<dbReference type="GO" id="GO:0051992">
    <property type="term" value="F:UDP-N-acetylmuramoyl-L-alanyl-D-glutamyl-meso-2,6-diaminopimelyl-D-alanyl-D-alanine:undecaprenyl-phosphate transferase activity"/>
    <property type="evidence" value="ECO:0007669"/>
    <property type="project" value="RHEA"/>
</dbReference>
<dbReference type="GO" id="GO:0051301">
    <property type="term" value="P:cell division"/>
    <property type="evidence" value="ECO:0007669"/>
    <property type="project" value="UniProtKB-KW"/>
</dbReference>
<dbReference type="GO" id="GO:0071555">
    <property type="term" value="P:cell wall organization"/>
    <property type="evidence" value="ECO:0007669"/>
    <property type="project" value="UniProtKB-KW"/>
</dbReference>
<dbReference type="GO" id="GO:0009252">
    <property type="term" value="P:peptidoglycan biosynthetic process"/>
    <property type="evidence" value="ECO:0007669"/>
    <property type="project" value="UniProtKB-UniRule"/>
</dbReference>
<dbReference type="GO" id="GO:0008360">
    <property type="term" value="P:regulation of cell shape"/>
    <property type="evidence" value="ECO:0007669"/>
    <property type="project" value="UniProtKB-KW"/>
</dbReference>
<dbReference type="CDD" id="cd06852">
    <property type="entry name" value="GT_MraY"/>
    <property type="match status" value="1"/>
</dbReference>
<dbReference type="HAMAP" id="MF_00038">
    <property type="entry name" value="MraY"/>
    <property type="match status" value="1"/>
</dbReference>
<dbReference type="InterPro" id="IPR000715">
    <property type="entry name" value="Glycosyl_transferase_4"/>
</dbReference>
<dbReference type="InterPro" id="IPR003524">
    <property type="entry name" value="PNAcMuramoyl-5peptid_Trfase"/>
</dbReference>
<dbReference type="InterPro" id="IPR018480">
    <property type="entry name" value="PNAcMuramoyl-5peptid_Trfase_CS"/>
</dbReference>
<dbReference type="NCBIfam" id="TIGR00445">
    <property type="entry name" value="mraY"/>
    <property type="match status" value="1"/>
</dbReference>
<dbReference type="PANTHER" id="PTHR22926">
    <property type="entry name" value="PHOSPHO-N-ACETYLMURAMOYL-PENTAPEPTIDE-TRANSFERASE"/>
    <property type="match status" value="1"/>
</dbReference>
<dbReference type="PANTHER" id="PTHR22926:SF5">
    <property type="entry name" value="PHOSPHO-N-ACETYLMURAMOYL-PENTAPEPTIDE-TRANSFERASE HOMOLOG"/>
    <property type="match status" value="1"/>
</dbReference>
<dbReference type="Pfam" id="PF00953">
    <property type="entry name" value="Glycos_transf_4"/>
    <property type="match status" value="1"/>
</dbReference>
<dbReference type="Pfam" id="PF10555">
    <property type="entry name" value="MraY_sig1"/>
    <property type="match status" value="1"/>
</dbReference>
<dbReference type="PROSITE" id="PS01347">
    <property type="entry name" value="MRAY_1"/>
    <property type="match status" value="1"/>
</dbReference>
<dbReference type="PROSITE" id="PS01348">
    <property type="entry name" value="MRAY_2"/>
    <property type="match status" value="1"/>
</dbReference>